<dbReference type="EC" id="6.1.1.5" evidence="1"/>
<dbReference type="EMBL" id="CP000013">
    <property type="protein sequence ID" value="AAU07680.1"/>
    <property type="molecule type" value="Genomic_DNA"/>
</dbReference>
<dbReference type="RefSeq" id="WP_011194124.1">
    <property type="nucleotide sequence ID" value="NZ_CP028872.1"/>
</dbReference>
<dbReference type="SMR" id="Q65ZU1"/>
<dbReference type="GeneID" id="45161631"/>
<dbReference type="KEGG" id="bga:BG0858"/>
<dbReference type="eggNOG" id="COG0060">
    <property type="taxonomic scope" value="Bacteria"/>
</dbReference>
<dbReference type="HOGENOM" id="CLU_001493_1_1_12"/>
<dbReference type="OrthoDB" id="9810365at2"/>
<dbReference type="Proteomes" id="UP000002276">
    <property type="component" value="Chromosome"/>
</dbReference>
<dbReference type="GO" id="GO:0005737">
    <property type="term" value="C:cytoplasm"/>
    <property type="evidence" value="ECO:0007669"/>
    <property type="project" value="UniProtKB-SubCell"/>
</dbReference>
<dbReference type="GO" id="GO:0002161">
    <property type="term" value="F:aminoacyl-tRNA deacylase activity"/>
    <property type="evidence" value="ECO:0007669"/>
    <property type="project" value="InterPro"/>
</dbReference>
<dbReference type="GO" id="GO:0005524">
    <property type="term" value="F:ATP binding"/>
    <property type="evidence" value="ECO:0007669"/>
    <property type="project" value="UniProtKB-UniRule"/>
</dbReference>
<dbReference type="GO" id="GO:0004822">
    <property type="term" value="F:isoleucine-tRNA ligase activity"/>
    <property type="evidence" value="ECO:0007669"/>
    <property type="project" value="UniProtKB-UniRule"/>
</dbReference>
<dbReference type="GO" id="GO:0000049">
    <property type="term" value="F:tRNA binding"/>
    <property type="evidence" value="ECO:0007669"/>
    <property type="project" value="InterPro"/>
</dbReference>
<dbReference type="GO" id="GO:0008270">
    <property type="term" value="F:zinc ion binding"/>
    <property type="evidence" value="ECO:0007669"/>
    <property type="project" value="UniProtKB-UniRule"/>
</dbReference>
<dbReference type="GO" id="GO:0006428">
    <property type="term" value="P:isoleucyl-tRNA aminoacylation"/>
    <property type="evidence" value="ECO:0007669"/>
    <property type="project" value="UniProtKB-UniRule"/>
</dbReference>
<dbReference type="CDD" id="cd07961">
    <property type="entry name" value="Anticodon_Ia_Ile_ABEc"/>
    <property type="match status" value="1"/>
</dbReference>
<dbReference type="CDD" id="cd00818">
    <property type="entry name" value="IleRS_core"/>
    <property type="match status" value="1"/>
</dbReference>
<dbReference type="FunFam" id="3.40.50.620:FF:000063">
    <property type="entry name" value="Isoleucine--tRNA ligase"/>
    <property type="match status" value="1"/>
</dbReference>
<dbReference type="FunFam" id="3.40.50.620:FF:000133">
    <property type="entry name" value="Isoleucyl-tRNA synthetase, cytoplasmic"/>
    <property type="match status" value="1"/>
</dbReference>
<dbReference type="Gene3D" id="3.40.50.620">
    <property type="entry name" value="HUPs"/>
    <property type="match status" value="2"/>
</dbReference>
<dbReference type="Gene3D" id="1.10.730.10">
    <property type="entry name" value="Isoleucyl-tRNA Synthetase, Domain 1"/>
    <property type="match status" value="1"/>
</dbReference>
<dbReference type="HAMAP" id="MF_02003">
    <property type="entry name" value="Ile_tRNA_synth_type2"/>
    <property type="match status" value="1"/>
</dbReference>
<dbReference type="InterPro" id="IPR002300">
    <property type="entry name" value="aa-tRNA-synth_Ia"/>
</dbReference>
<dbReference type="InterPro" id="IPR033709">
    <property type="entry name" value="Anticodon_Ile_ABEc"/>
</dbReference>
<dbReference type="InterPro" id="IPR002301">
    <property type="entry name" value="Ile-tRNA-ligase"/>
</dbReference>
<dbReference type="InterPro" id="IPR023586">
    <property type="entry name" value="Ile-tRNA-ligase_type2"/>
</dbReference>
<dbReference type="InterPro" id="IPR013155">
    <property type="entry name" value="M/V/L/I-tRNA-synth_anticd-bd"/>
</dbReference>
<dbReference type="InterPro" id="IPR014729">
    <property type="entry name" value="Rossmann-like_a/b/a_fold"/>
</dbReference>
<dbReference type="InterPro" id="IPR009080">
    <property type="entry name" value="tRNAsynth_Ia_anticodon-bd"/>
</dbReference>
<dbReference type="InterPro" id="IPR009008">
    <property type="entry name" value="Val/Leu/Ile-tRNA-synth_edit"/>
</dbReference>
<dbReference type="NCBIfam" id="TIGR00392">
    <property type="entry name" value="ileS"/>
    <property type="match status" value="1"/>
</dbReference>
<dbReference type="PANTHER" id="PTHR42780:SF1">
    <property type="entry name" value="ISOLEUCINE--TRNA LIGASE, CYTOPLASMIC"/>
    <property type="match status" value="1"/>
</dbReference>
<dbReference type="PANTHER" id="PTHR42780">
    <property type="entry name" value="SOLEUCYL-TRNA SYNTHETASE"/>
    <property type="match status" value="1"/>
</dbReference>
<dbReference type="Pfam" id="PF08264">
    <property type="entry name" value="Anticodon_1"/>
    <property type="match status" value="1"/>
</dbReference>
<dbReference type="Pfam" id="PF19302">
    <property type="entry name" value="DUF5915"/>
    <property type="match status" value="1"/>
</dbReference>
<dbReference type="Pfam" id="PF00133">
    <property type="entry name" value="tRNA-synt_1"/>
    <property type="match status" value="1"/>
</dbReference>
<dbReference type="PRINTS" id="PR00984">
    <property type="entry name" value="TRNASYNTHILE"/>
</dbReference>
<dbReference type="SUPFAM" id="SSF47323">
    <property type="entry name" value="Anticodon-binding domain of a subclass of class I aminoacyl-tRNA synthetases"/>
    <property type="match status" value="2"/>
</dbReference>
<dbReference type="SUPFAM" id="SSF52374">
    <property type="entry name" value="Nucleotidylyl transferase"/>
    <property type="match status" value="1"/>
</dbReference>
<dbReference type="SUPFAM" id="SSF50677">
    <property type="entry name" value="ValRS/IleRS/LeuRS editing domain"/>
    <property type="match status" value="1"/>
</dbReference>
<reference key="1">
    <citation type="journal article" date="2004" name="Nucleic Acids Res.">
        <title>Comparative analysis of the Borrelia garinii genome.</title>
        <authorList>
            <person name="Gloeckner G."/>
            <person name="Lehmann R."/>
            <person name="Romualdi A."/>
            <person name="Pradella S."/>
            <person name="Schulte-Spechtel U."/>
            <person name="Schilhabel M."/>
            <person name="Wilske B."/>
            <person name="Suehnel J."/>
            <person name="Platzer M."/>
        </authorList>
    </citation>
    <scope>NUCLEOTIDE SEQUENCE [LARGE SCALE GENOMIC DNA]</scope>
    <source>
        <strain>ATCC BAA-2496 / DSM 23469 / PBi</strain>
    </source>
</reference>
<name>SYI_BORGP</name>
<keyword id="KW-0030">Aminoacyl-tRNA synthetase</keyword>
<keyword id="KW-0067">ATP-binding</keyword>
<keyword id="KW-0963">Cytoplasm</keyword>
<keyword id="KW-0436">Ligase</keyword>
<keyword id="KW-0479">Metal-binding</keyword>
<keyword id="KW-0547">Nucleotide-binding</keyword>
<keyword id="KW-0648">Protein biosynthesis</keyword>
<keyword id="KW-0862">Zinc</keyword>
<evidence type="ECO:0000255" key="1">
    <source>
        <dbReference type="HAMAP-Rule" id="MF_02003"/>
    </source>
</evidence>
<sequence length="1042" mass="122408">MFKKVENKANFPKIEEKILKFWNDNKIFEKSMEQREGCEEFTFYDGPPFATGLPHFGHFVPNTIKDIIPRYQTMKGKYVKRNFGWDTHGLPVEYEVEKKLGISGKYEIENYGIENFNKECKKIVLRYTEEWKNIILRLGRWVDFEKGYKTMDISFMESVWWVFKNLYNKGLIYESYYVLPYSPKLATPLSNFEVNLGEYKEVNDPSLTIKFKIKDKNEYLLAWTTTPWTLPSNLGIAVGKEIEYSKIFDKKKEEILILGSKKINSYFDDENAYTIIEKFKGSQLQGIEYEPIFNYFLEQKDKGAFKVHTADYITTDDGTGIVHIAPFGEEDYRVLKKHTNVDIIDPLDAECKFTNRVKDFKGLFVKDADKKIIENLKLRNFLFKRENYLHRYPFCYRTNYPIIYRPISSWFVNVEKIKTQLLEVNEKINWMPAHLKKGRFGKWLENAKDWAISRNRFWGNPIPIWICSKTGKKICVGSRKELEELSGQKIEDLHKDKIDKITWPSKDGGTFIRTSEVLDCWFESGAMPYASNHYPFANESNFKNIFPADFIAEGLDQTRGWFYTLTILGTSLFENTAFKNVIVNGLVLSSDGRKMSKSFKNYTDPMEVINTFGADALRLYLIMSPVVKADDLKYSDNGVRDVLKNIIIPIWNAYSFFTTYAIIDKFKPTKNLSLVKSNNLDKWIISELESLKKILNKEIDKYNLTKSIESLLEFIDKLNNWYIRRSRRRFWKSENDKDKNDAYETLYYAIKTLMILLAPFIPFITEEIYQNLKTDEDKQSIHLNDYPKANENFIDKTIEEKINLARKITSMARSLRSLHNIKIRMPISTIYVVTKNQNEQNMLIEMQEIILDEINVKEMKIKSNEEELITYKAKANFKELGKKLGKDMKTVSIEISKLKNEDIIKIINGISHEIKVDNAKYYLSLNDIILERDEKDNLKVINEESITIGIDSLITQELYLEGLTREFVRQIQNLRKEKNFDVSDRINLYIENNATLEEILNKFEKYIKTETLALNIILNKSKLEKKINLDNDIFTIIGIEKC</sequence>
<gene>
    <name evidence="1" type="primary">ileS</name>
    <name type="ordered locus">BG0858</name>
</gene>
<organism>
    <name type="scientific">Borrelia garinii subsp. bavariensis (strain ATCC BAA-2496 / DSM 23469 / PBi)</name>
    <name type="common">Borreliella bavariensis</name>
    <dbReference type="NCBI Taxonomy" id="290434"/>
    <lineage>
        <taxon>Bacteria</taxon>
        <taxon>Pseudomonadati</taxon>
        <taxon>Spirochaetota</taxon>
        <taxon>Spirochaetia</taxon>
        <taxon>Spirochaetales</taxon>
        <taxon>Borreliaceae</taxon>
        <taxon>Borreliella</taxon>
    </lineage>
</organism>
<protein>
    <recommendedName>
        <fullName evidence="1">Isoleucine--tRNA ligase</fullName>
        <ecNumber evidence="1">6.1.1.5</ecNumber>
    </recommendedName>
    <alternativeName>
        <fullName evidence="1">Isoleucyl-tRNA synthetase</fullName>
        <shortName evidence="1">IleRS</shortName>
    </alternativeName>
</protein>
<proteinExistence type="inferred from homology"/>
<accession>Q65ZU1</accession>
<comment type="function">
    <text evidence="1">Catalyzes the attachment of isoleucine to tRNA(Ile). As IleRS can inadvertently accommodate and process structurally similar amino acids such as valine, to avoid such errors it has two additional distinct tRNA(Ile)-dependent editing activities. One activity is designated as 'pretransfer' editing and involves the hydrolysis of activated Val-AMP. The other activity is designated 'posttransfer' editing and involves deacylation of mischarged Val-tRNA(Ile).</text>
</comment>
<comment type="catalytic activity">
    <reaction evidence="1">
        <text>tRNA(Ile) + L-isoleucine + ATP = L-isoleucyl-tRNA(Ile) + AMP + diphosphate</text>
        <dbReference type="Rhea" id="RHEA:11060"/>
        <dbReference type="Rhea" id="RHEA-COMP:9666"/>
        <dbReference type="Rhea" id="RHEA-COMP:9695"/>
        <dbReference type="ChEBI" id="CHEBI:30616"/>
        <dbReference type="ChEBI" id="CHEBI:33019"/>
        <dbReference type="ChEBI" id="CHEBI:58045"/>
        <dbReference type="ChEBI" id="CHEBI:78442"/>
        <dbReference type="ChEBI" id="CHEBI:78528"/>
        <dbReference type="ChEBI" id="CHEBI:456215"/>
        <dbReference type="EC" id="6.1.1.5"/>
    </reaction>
</comment>
<comment type="cofactor">
    <cofactor evidence="1">
        <name>Zn(2+)</name>
        <dbReference type="ChEBI" id="CHEBI:29105"/>
    </cofactor>
</comment>
<comment type="subunit">
    <text evidence="1">Monomer.</text>
</comment>
<comment type="subcellular location">
    <subcellularLocation>
        <location evidence="1">Cytoplasm</location>
    </subcellularLocation>
</comment>
<comment type="domain">
    <text evidence="1">IleRS has two distinct active sites: one for aminoacylation and one for editing. The misactivated valine is translocated from the active site to the editing site, which sterically excludes the correctly activated isoleucine. The single editing site contains two valyl binding pockets, one specific for each substrate (Val-AMP or Val-tRNA(Ile)).</text>
</comment>
<comment type="similarity">
    <text evidence="1">Belongs to the class-I aminoacyl-tRNA synthetase family. IleS type 2 subfamily.</text>
</comment>
<feature type="chain" id="PRO_0000098526" description="Isoleucine--tRNA ligase">
    <location>
        <begin position="1"/>
        <end position="1042"/>
    </location>
</feature>
<feature type="short sequence motif" description="'HIGH' region">
    <location>
        <begin position="48"/>
        <end position="58"/>
    </location>
</feature>
<feature type="short sequence motif" description="'KMSKS' region">
    <location>
        <begin position="594"/>
        <end position="598"/>
    </location>
</feature>
<feature type="binding site" evidence="1">
    <location>
        <position position="597"/>
    </location>
    <ligand>
        <name>ATP</name>
        <dbReference type="ChEBI" id="CHEBI:30616"/>
    </ligand>
</feature>